<comment type="function">
    <text evidence="2">Component of the acetyl coenzyme A carboxylase (ACC) complex. Biotin carboxylase (BC) catalyzes the carboxylation of biotin on its carrier protein (BCCP) and then the CO(2) group is transferred by the transcarboxylase to acetyl-CoA to form malonyl-CoA.</text>
</comment>
<comment type="catalytic activity">
    <reaction evidence="2">
        <text>N(6)-carboxybiotinyl-L-lysyl-[protein] + acetyl-CoA = N(6)-biotinyl-L-lysyl-[protein] + malonyl-CoA</text>
        <dbReference type="Rhea" id="RHEA:54728"/>
        <dbReference type="Rhea" id="RHEA-COMP:10505"/>
        <dbReference type="Rhea" id="RHEA-COMP:10506"/>
        <dbReference type="ChEBI" id="CHEBI:57288"/>
        <dbReference type="ChEBI" id="CHEBI:57384"/>
        <dbReference type="ChEBI" id="CHEBI:83144"/>
        <dbReference type="ChEBI" id="CHEBI:83145"/>
        <dbReference type="EC" id="2.1.3.15"/>
    </reaction>
</comment>
<comment type="cofactor">
    <cofactor evidence="2">
        <name>Zn(2+)</name>
        <dbReference type="ChEBI" id="CHEBI:29105"/>
    </cofactor>
    <text evidence="2">Binds 1 zinc ion per subunit.</text>
</comment>
<comment type="pathway">
    <text evidence="2">Lipid metabolism; malonyl-CoA biosynthesis; malonyl-CoA from acetyl-CoA: step 1/1.</text>
</comment>
<comment type="subunit">
    <text evidence="1">Acetyl-CoA carboxylase is a heterohexamer composed of biotin carboxyl carrier protein, biotin carboxylase and 2 subunits each of ACCase subunit alpha and ACCase plastid-coded subunit beta (accD).</text>
</comment>
<comment type="subcellular location">
    <subcellularLocation>
        <location evidence="2">Plastid</location>
        <location evidence="2">Chloroplast stroma</location>
    </subcellularLocation>
</comment>
<comment type="RNA editing">
    <location>
        <position position="1" evidence="4"/>
    </location>
    <location>
        <position position="3" evidence="4"/>
    </location>
    <location>
        <position position="59" evidence="4"/>
    </location>
    <location>
        <position position="63" evidence="4"/>
    </location>
    <location>
        <position position="73" evidence="4"/>
    </location>
    <location>
        <position position="88" evidence="4"/>
    </location>
    <location>
        <position position="115" evidence="4"/>
    </location>
    <location>
        <position position="139" evidence="4"/>
    </location>
    <location>
        <position position="146" evidence="4"/>
    </location>
    <location>
        <position position="180" evidence="4"/>
    </location>
    <location>
        <position position="184" evidence="4"/>
    </location>
    <location>
        <position position="260" evidence="4"/>
    </location>
    <location>
        <position position="284" evidence="4"/>
    </location>
    <text>The initiator methionine is created by RNA editing. The nonsense codon at position 260 is modified to a sense codon.</text>
</comment>
<comment type="similarity">
    <text evidence="2">Belongs to the AccD/PCCB family.</text>
</comment>
<organism>
    <name type="scientific">Adiantum capillus-veneris</name>
    <name type="common">Maidenhair fern</name>
    <dbReference type="NCBI Taxonomy" id="13818"/>
    <lineage>
        <taxon>Eukaryota</taxon>
        <taxon>Viridiplantae</taxon>
        <taxon>Streptophyta</taxon>
        <taxon>Embryophyta</taxon>
        <taxon>Tracheophyta</taxon>
        <taxon>Polypodiopsida</taxon>
        <taxon>Polypodiidae</taxon>
        <taxon>Polypodiales</taxon>
        <taxon>Pteridineae</taxon>
        <taxon>Pteridaceae</taxon>
        <taxon>Vittarioideae</taxon>
        <taxon>Adiantum</taxon>
    </lineage>
</organism>
<sequence>MVMSVINWFEDRQKFGGLIGAFLEEATRSSMTNERDRRISVNANKGLWARCDNCGNMLYVKFLKQNRSVCEECGYHLSMSSMERIELLIDPNTWIPLDEDMSARDILSFSDEDSYETRILLSQEKTGLTDAVQTGIGYLNGTLIALGVMDFHFMGGSMGSVVGEKITRLIEYATQRLLPLVLICASGGARMQEGTLSLMQMAKISSVLQLYQVQNKLLYISVLTYPTTGGVTASFGMLGDIIIAEPKAYIAFAGKRVIEQTLRQKIPDGFQAAESLFDNGLLDLIVPRNLLKGVLSEISGLYLSVPYNKN</sequence>
<protein>
    <recommendedName>
        <fullName evidence="2">Acetyl-coenzyme A carboxylase carboxyl transferase subunit beta, chloroplastic</fullName>
        <shortName evidence="2">ACCase subunit beta</shortName>
        <shortName evidence="2">Acetyl-CoA carboxylase carboxyltransferase subunit beta</shortName>
        <ecNumber evidence="2">2.1.3.15</ecNumber>
    </recommendedName>
</protein>
<evidence type="ECO:0000250" key="1"/>
<evidence type="ECO:0000255" key="2">
    <source>
        <dbReference type="HAMAP-Rule" id="MF_01395"/>
    </source>
</evidence>
<evidence type="ECO:0000255" key="3">
    <source>
        <dbReference type="PROSITE-ProRule" id="PRU01136"/>
    </source>
</evidence>
<evidence type="ECO:0000269" key="4">
    <source>
    </source>
</evidence>
<gene>
    <name evidence="2" type="primary">accD</name>
</gene>
<dbReference type="EC" id="2.1.3.15" evidence="2"/>
<dbReference type="EMBL" id="AY178864">
    <property type="protein sequence ID" value="AAP29400.2"/>
    <property type="molecule type" value="Genomic_DNA"/>
</dbReference>
<dbReference type="RefSeq" id="NP_848069.2">
    <property type="nucleotide sequence ID" value="NC_004766.1"/>
</dbReference>
<dbReference type="SMR" id="Q85FL3"/>
<dbReference type="GeneID" id="807410"/>
<dbReference type="UniPathway" id="UPA00655">
    <property type="reaction ID" value="UER00711"/>
</dbReference>
<dbReference type="GO" id="GO:0009317">
    <property type="term" value="C:acetyl-CoA carboxylase complex"/>
    <property type="evidence" value="ECO:0007669"/>
    <property type="project" value="InterPro"/>
</dbReference>
<dbReference type="GO" id="GO:0009570">
    <property type="term" value="C:chloroplast stroma"/>
    <property type="evidence" value="ECO:0007669"/>
    <property type="project" value="UniProtKB-SubCell"/>
</dbReference>
<dbReference type="GO" id="GO:0003989">
    <property type="term" value="F:acetyl-CoA carboxylase activity"/>
    <property type="evidence" value="ECO:0007669"/>
    <property type="project" value="InterPro"/>
</dbReference>
<dbReference type="GO" id="GO:0005524">
    <property type="term" value="F:ATP binding"/>
    <property type="evidence" value="ECO:0007669"/>
    <property type="project" value="UniProtKB-KW"/>
</dbReference>
<dbReference type="GO" id="GO:0016743">
    <property type="term" value="F:carboxyl- or carbamoyltransferase activity"/>
    <property type="evidence" value="ECO:0007669"/>
    <property type="project" value="UniProtKB-UniRule"/>
</dbReference>
<dbReference type="GO" id="GO:0008270">
    <property type="term" value="F:zinc ion binding"/>
    <property type="evidence" value="ECO:0007669"/>
    <property type="project" value="UniProtKB-UniRule"/>
</dbReference>
<dbReference type="GO" id="GO:0006633">
    <property type="term" value="P:fatty acid biosynthetic process"/>
    <property type="evidence" value="ECO:0007669"/>
    <property type="project" value="UniProtKB-KW"/>
</dbReference>
<dbReference type="GO" id="GO:2001295">
    <property type="term" value="P:malonyl-CoA biosynthetic process"/>
    <property type="evidence" value="ECO:0007669"/>
    <property type="project" value="UniProtKB-UniRule"/>
</dbReference>
<dbReference type="Gene3D" id="3.90.226.10">
    <property type="entry name" value="2-enoyl-CoA Hydratase, Chain A, domain 1"/>
    <property type="match status" value="1"/>
</dbReference>
<dbReference type="HAMAP" id="MF_01395">
    <property type="entry name" value="AcetylCoA_CT_beta"/>
    <property type="match status" value="1"/>
</dbReference>
<dbReference type="InterPro" id="IPR034733">
    <property type="entry name" value="AcCoA_carboxyl_beta"/>
</dbReference>
<dbReference type="InterPro" id="IPR000438">
    <property type="entry name" value="Acetyl_CoA_COase_Trfase_b_su"/>
</dbReference>
<dbReference type="InterPro" id="IPR029045">
    <property type="entry name" value="ClpP/crotonase-like_dom_sf"/>
</dbReference>
<dbReference type="InterPro" id="IPR011762">
    <property type="entry name" value="COA_CT_N"/>
</dbReference>
<dbReference type="NCBIfam" id="TIGR00515">
    <property type="entry name" value="accD"/>
    <property type="match status" value="1"/>
</dbReference>
<dbReference type="PANTHER" id="PTHR42995">
    <property type="entry name" value="ACETYL-COENZYME A CARBOXYLASE CARBOXYL TRANSFERASE SUBUNIT BETA, CHLOROPLASTIC"/>
    <property type="match status" value="1"/>
</dbReference>
<dbReference type="PANTHER" id="PTHR42995:SF5">
    <property type="entry name" value="ACETYL-COENZYME A CARBOXYLASE CARBOXYL TRANSFERASE SUBUNIT BETA, CHLOROPLASTIC"/>
    <property type="match status" value="1"/>
</dbReference>
<dbReference type="Pfam" id="PF01039">
    <property type="entry name" value="Carboxyl_trans"/>
    <property type="match status" value="1"/>
</dbReference>
<dbReference type="PRINTS" id="PR01070">
    <property type="entry name" value="ACCCTRFRASEB"/>
</dbReference>
<dbReference type="SUPFAM" id="SSF52096">
    <property type="entry name" value="ClpP/crotonase"/>
    <property type="match status" value="1"/>
</dbReference>
<dbReference type="PROSITE" id="PS50980">
    <property type="entry name" value="COA_CT_NTER"/>
    <property type="match status" value="1"/>
</dbReference>
<name>ACCD_ADICA</name>
<accession>Q85FL3</accession>
<geneLocation type="chloroplast"/>
<feature type="chain" id="PRO_0000199777" description="Acetyl-coenzyme A carboxylase carboxyl transferase subunit beta, chloroplastic">
    <location>
        <begin position="1"/>
        <end position="310"/>
    </location>
</feature>
<feature type="domain" description="CoA carboxyltransferase N-terminal" evidence="3">
    <location>
        <begin position="47"/>
        <end position="310"/>
    </location>
</feature>
<feature type="zinc finger region" description="C4-type" evidence="2">
    <location>
        <begin position="51"/>
        <end position="73"/>
    </location>
</feature>
<feature type="binding site" evidence="2">
    <location>
        <position position="51"/>
    </location>
    <ligand>
        <name>Zn(2+)</name>
        <dbReference type="ChEBI" id="CHEBI:29105"/>
    </ligand>
</feature>
<feature type="binding site" evidence="2">
    <location>
        <position position="54"/>
    </location>
    <ligand>
        <name>Zn(2+)</name>
        <dbReference type="ChEBI" id="CHEBI:29105"/>
    </ligand>
</feature>
<feature type="binding site" evidence="2">
    <location>
        <position position="70"/>
    </location>
    <ligand>
        <name>Zn(2+)</name>
        <dbReference type="ChEBI" id="CHEBI:29105"/>
    </ligand>
</feature>
<feature type="binding site" evidence="2">
    <location>
        <position position="73"/>
    </location>
    <ligand>
        <name>Zn(2+)</name>
        <dbReference type="ChEBI" id="CHEBI:29105"/>
    </ligand>
</feature>
<proteinExistence type="evidence at transcript level"/>
<reference key="1">
    <citation type="journal article" date="2003" name="DNA Res.">
        <title>Complete nucleotide sequence of the chloroplast genome from a leptosporangiate fern, Adiantum capillus-veneris L.</title>
        <authorList>
            <person name="Wolf P.G."/>
            <person name="Rowe C.A."/>
            <person name="Sinclair R.B."/>
            <person name="Hasebe M."/>
        </authorList>
    </citation>
    <scope>NUCLEOTIDE SEQUENCE [LARGE SCALE GENOMIC DNA]</scope>
</reference>
<reference key="2">
    <citation type="journal article" date="2004" name="Gene">
        <title>High levels of RNA editing in a vascular plant chloroplast genome: analysis of transcripts from the fern Adiantum capillus-veneris.</title>
        <authorList>
            <person name="Wolf P.G."/>
            <person name="Rowe C.A."/>
            <person name="Hasebe M."/>
        </authorList>
    </citation>
    <scope>NUCLEOTIDE SEQUENCE [GENOMIC DNA]</scope>
    <scope>RNA EDITING</scope>
    <source>
        <tissue>Frond</tissue>
    </source>
</reference>
<keyword id="KW-0067">ATP-binding</keyword>
<keyword id="KW-0150">Chloroplast</keyword>
<keyword id="KW-0275">Fatty acid biosynthesis</keyword>
<keyword id="KW-0276">Fatty acid metabolism</keyword>
<keyword id="KW-0444">Lipid biosynthesis</keyword>
<keyword id="KW-0443">Lipid metabolism</keyword>
<keyword id="KW-0479">Metal-binding</keyword>
<keyword id="KW-0547">Nucleotide-binding</keyword>
<keyword id="KW-0934">Plastid</keyword>
<keyword id="KW-0691">RNA editing</keyword>
<keyword id="KW-0808">Transferase</keyword>
<keyword id="KW-0862">Zinc</keyword>
<keyword id="KW-0863">Zinc-finger</keyword>